<proteinExistence type="evidence at protein level"/>
<feature type="initiator methionine" description="Removed" evidence="1">
    <location>
        <position position="1"/>
    </location>
</feature>
<feature type="chain" id="PRO_0000091424" description="Elongation factor Tu-B">
    <location>
        <begin position="2"/>
        <end position="406"/>
    </location>
</feature>
<feature type="domain" description="tr-type G">
    <location>
        <begin position="10"/>
        <end position="215"/>
    </location>
</feature>
<feature type="region of interest" description="G1" evidence="1">
    <location>
        <begin position="19"/>
        <end position="26"/>
    </location>
</feature>
<feature type="region of interest" description="G2" evidence="1">
    <location>
        <begin position="61"/>
        <end position="65"/>
    </location>
</feature>
<feature type="region of interest" description="G3" evidence="1">
    <location>
        <begin position="82"/>
        <end position="85"/>
    </location>
</feature>
<feature type="region of interest" description="G4" evidence="1">
    <location>
        <begin position="137"/>
        <end position="140"/>
    </location>
</feature>
<feature type="region of interest" description="G5" evidence="1">
    <location>
        <begin position="175"/>
        <end position="177"/>
    </location>
</feature>
<feature type="binding site" evidence="4">
    <location>
        <begin position="19"/>
        <end position="26"/>
    </location>
    <ligand>
        <name>GTP</name>
        <dbReference type="ChEBI" id="CHEBI:37565"/>
    </ligand>
</feature>
<feature type="binding site" evidence="4">
    <location>
        <position position="26"/>
    </location>
    <ligand>
        <name>Mg(2+)</name>
        <dbReference type="ChEBI" id="CHEBI:18420"/>
    </ligand>
</feature>
<feature type="binding site" evidence="4">
    <location>
        <begin position="82"/>
        <end position="86"/>
    </location>
    <ligand>
        <name>GTP</name>
        <dbReference type="ChEBI" id="CHEBI:37565"/>
    </ligand>
</feature>
<feature type="binding site" evidence="4">
    <location>
        <begin position="137"/>
        <end position="140"/>
    </location>
    <ligand>
        <name>GTP</name>
        <dbReference type="ChEBI" id="CHEBI:37565"/>
    </ligand>
</feature>
<feature type="modified residue" description="Phosphothreonine" evidence="2">
    <location>
        <position position="395"/>
    </location>
</feature>
<feature type="strand" evidence="6">
    <location>
        <begin position="12"/>
        <end position="18"/>
    </location>
</feature>
<feature type="helix" evidence="6">
    <location>
        <begin position="25"/>
        <end position="39"/>
    </location>
</feature>
<feature type="helix" evidence="6">
    <location>
        <begin position="48"/>
        <end position="51"/>
    </location>
</feature>
<feature type="helix" evidence="6">
    <location>
        <begin position="55"/>
        <end position="60"/>
    </location>
</feature>
<feature type="strand" evidence="6">
    <location>
        <begin position="67"/>
        <end position="72"/>
    </location>
</feature>
<feature type="strand" evidence="6">
    <location>
        <begin position="77"/>
        <end position="82"/>
    </location>
</feature>
<feature type="helix" evidence="6">
    <location>
        <begin position="87"/>
        <end position="89"/>
    </location>
</feature>
<feature type="helix" evidence="6">
    <location>
        <begin position="90"/>
        <end position="97"/>
    </location>
</feature>
<feature type="strand" evidence="6">
    <location>
        <begin position="101"/>
        <end position="108"/>
    </location>
</feature>
<feature type="turn" evidence="6">
    <location>
        <begin position="109"/>
        <end position="111"/>
    </location>
</feature>
<feature type="helix" evidence="6">
    <location>
        <begin position="115"/>
        <end position="127"/>
    </location>
</feature>
<feature type="strand" evidence="6">
    <location>
        <begin position="132"/>
        <end position="137"/>
    </location>
</feature>
<feature type="helix" evidence="6">
    <location>
        <begin position="139"/>
        <end position="141"/>
    </location>
</feature>
<feature type="helix" evidence="6">
    <location>
        <begin position="145"/>
        <end position="161"/>
    </location>
</feature>
<feature type="turn" evidence="6">
    <location>
        <begin position="166"/>
        <end position="168"/>
    </location>
</feature>
<feature type="strand" evidence="6">
    <location>
        <begin position="171"/>
        <end position="173"/>
    </location>
</feature>
<feature type="helix" evidence="6">
    <location>
        <begin position="176"/>
        <end position="185"/>
    </location>
</feature>
<feature type="helix" evidence="6">
    <location>
        <begin position="195"/>
        <end position="210"/>
    </location>
</feature>
<feature type="strand" evidence="6">
    <location>
        <begin position="223"/>
        <end position="225"/>
    </location>
</feature>
<feature type="strand" evidence="6">
    <location>
        <begin position="228"/>
        <end position="232"/>
    </location>
</feature>
<feature type="turn" evidence="6">
    <location>
        <begin position="233"/>
        <end position="235"/>
    </location>
</feature>
<feature type="strand" evidence="6">
    <location>
        <begin position="236"/>
        <end position="242"/>
    </location>
</feature>
<feature type="strand" evidence="6">
    <location>
        <begin position="245"/>
        <end position="248"/>
    </location>
</feature>
<feature type="strand" evidence="6">
    <location>
        <begin position="253"/>
        <end position="262"/>
    </location>
</feature>
<feature type="strand" evidence="6">
    <location>
        <begin position="264"/>
        <end position="273"/>
    </location>
</feature>
<feature type="strand" evidence="6">
    <location>
        <begin position="286"/>
        <end position="293"/>
    </location>
</feature>
<feature type="helix" evidence="6">
    <location>
        <begin position="296"/>
        <end position="298"/>
    </location>
</feature>
<feature type="strand" evidence="6">
    <location>
        <begin position="304"/>
        <end position="307"/>
    </location>
</feature>
<feature type="strand" evidence="6">
    <location>
        <begin position="310"/>
        <end position="323"/>
    </location>
</feature>
<feature type="helix" evidence="6">
    <location>
        <begin position="326"/>
        <end position="328"/>
    </location>
</feature>
<feature type="strand" evidence="6">
    <location>
        <begin position="342"/>
        <end position="345"/>
    </location>
</feature>
<feature type="strand" evidence="6">
    <location>
        <begin position="348"/>
        <end position="355"/>
    </location>
</feature>
<feature type="strand" evidence="6">
    <location>
        <begin position="368"/>
        <end position="381"/>
    </location>
</feature>
<feature type="strand" evidence="6">
    <location>
        <begin position="386"/>
        <end position="391"/>
    </location>
</feature>
<feature type="strand" evidence="6">
    <location>
        <begin position="394"/>
        <end position="404"/>
    </location>
</feature>
<accession>P60339</accession>
<accession>P07157</accession>
<accession>Q5SLP2</accession>
<organism>
    <name type="scientific">Thermus thermophilus (strain ATCC 27634 / DSM 579 / HB8)</name>
    <dbReference type="NCBI Taxonomy" id="300852"/>
    <lineage>
        <taxon>Bacteria</taxon>
        <taxon>Thermotogati</taxon>
        <taxon>Deinococcota</taxon>
        <taxon>Deinococci</taxon>
        <taxon>Thermales</taxon>
        <taxon>Thermaceae</taxon>
        <taxon>Thermus</taxon>
    </lineage>
</organism>
<sequence length="406" mass="44782">MAKGEFIRTKPHVNVGTIGHVDHGKTTLTAALTFVTAAENPNVEVKDYGDIDKAPEERARGITINTAHVEYETAKRHYSHVDCPGHADYIKNMITGAAQMDGAILVVSAADGPMPQTREHILLARQVGVPYIVVFMNKVDMVDDPELLDLVEMEVRDLLNQYEFPGDEVPVIRGSALLALEQMHRNPKTRRGENEWVDKIWELLDAIDEYIPTPVRDVDKPFLMPVEDVFTITGRGTVATGRIERGKVKVGDEVEIVGLAPETRKTVVTGVEMHRKTLQEGIAGDNVGVLLRGVSREEVERGQVLAKPGSITPHTKFEASVYVLKKEEGGRHTGFFSGYRPQFYFRTTDVTGVVQLPPGVEMVMPGDNVTFTVELIKPVALEEGLRFAIREGGRTVGAGVVTKILE</sequence>
<comment type="function">
    <text evidence="4">GTP hydrolase that promotes the GTP-dependent binding of aminoacyl-tRNA to the A-site of ribosomes during protein biosynthesis.</text>
</comment>
<comment type="function">
    <text evidence="5">Protects glycyl-tRNA(Gly) from hydrolysis by E.coli D-aminoacyl-tRNA deacylase (dtd) (PubMed:27224426).</text>
</comment>
<comment type="catalytic activity">
    <reaction evidence="4">
        <text>GTP + H2O = GDP + phosphate + H(+)</text>
        <dbReference type="Rhea" id="RHEA:19669"/>
        <dbReference type="ChEBI" id="CHEBI:15377"/>
        <dbReference type="ChEBI" id="CHEBI:15378"/>
        <dbReference type="ChEBI" id="CHEBI:37565"/>
        <dbReference type="ChEBI" id="CHEBI:43474"/>
        <dbReference type="ChEBI" id="CHEBI:58189"/>
        <dbReference type="EC" id="3.6.5.3"/>
    </reaction>
    <physiologicalReaction direction="left-to-right" evidence="4">
        <dbReference type="Rhea" id="RHEA:19670"/>
    </physiologicalReaction>
</comment>
<comment type="subunit">
    <text evidence="4">Monomer.</text>
</comment>
<comment type="subcellular location">
    <subcellularLocation>
        <location>Cytoplasm</location>
    </subcellularLocation>
</comment>
<comment type="PTM">
    <text evidence="3">Phosphorylated on a threonine.</text>
</comment>
<comment type="similarity">
    <text evidence="4">Belongs to the TRAFAC class translation factor GTPase superfamily. Classic translation factor GTPase family. EF-Tu/EF-1A subfamily.</text>
</comment>
<gene>
    <name evidence="4" type="primary">tufB</name>
    <name type="ordered locus">TTHA0251</name>
</gene>
<protein>
    <recommendedName>
        <fullName evidence="4">Elongation factor Tu-B</fullName>
        <shortName evidence="4">EF-Tu-B</shortName>
        <ecNumber evidence="4">3.6.5.3</ecNumber>
    </recommendedName>
</protein>
<name>EFTU2_THET8</name>
<keyword id="KW-0002">3D-structure</keyword>
<keyword id="KW-0963">Cytoplasm</keyword>
<keyword id="KW-0251">Elongation factor</keyword>
<keyword id="KW-0342">GTP-binding</keyword>
<keyword id="KW-0378">Hydrolase</keyword>
<keyword id="KW-0460">Magnesium</keyword>
<keyword id="KW-0479">Metal-binding</keyword>
<keyword id="KW-0547">Nucleotide-binding</keyword>
<keyword id="KW-0597">Phosphoprotein</keyword>
<keyword id="KW-0648">Protein biosynthesis</keyword>
<keyword id="KW-1185">Reference proteome</keyword>
<evidence type="ECO:0000250" key="1"/>
<evidence type="ECO:0000250" key="2">
    <source>
        <dbReference type="UniProtKB" id="P0CE47"/>
    </source>
</evidence>
<evidence type="ECO:0000250" key="3">
    <source>
        <dbReference type="UniProtKB" id="Q5SHN6"/>
    </source>
</evidence>
<evidence type="ECO:0000255" key="4">
    <source>
        <dbReference type="HAMAP-Rule" id="MF_00118"/>
    </source>
</evidence>
<evidence type="ECO:0000269" key="5">
    <source>
    </source>
</evidence>
<evidence type="ECO:0007829" key="6">
    <source>
        <dbReference type="PDB" id="2C77"/>
    </source>
</evidence>
<dbReference type="EC" id="3.6.5.3" evidence="4"/>
<dbReference type="EMBL" id="X61957">
    <property type="protein sequence ID" value="CAA43956.1"/>
    <property type="molecule type" value="Genomic_DNA"/>
</dbReference>
<dbReference type="EMBL" id="AP008226">
    <property type="protein sequence ID" value="BAD70074.1"/>
    <property type="molecule type" value="Genomic_DNA"/>
</dbReference>
<dbReference type="PIR" id="S00229">
    <property type="entry name" value="S00229"/>
</dbReference>
<dbReference type="PIR" id="S17146">
    <property type="entry name" value="S17146"/>
</dbReference>
<dbReference type="RefSeq" id="WP_011227805.1">
    <property type="nucleotide sequence ID" value="NC_006461.1"/>
</dbReference>
<dbReference type="RefSeq" id="YP_143517.1">
    <property type="nucleotide sequence ID" value="NC_006461.1"/>
</dbReference>
<dbReference type="PDB" id="2C77">
    <property type="method" value="X-ray"/>
    <property type="resolution" value="1.60 A"/>
    <property type="chains" value="A=2-406"/>
</dbReference>
<dbReference type="PDB" id="2P8W">
    <property type="method" value="EM"/>
    <property type="resolution" value="11.30 A"/>
    <property type="chains" value="S=36-70"/>
</dbReference>
<dbReference type="PDB" id="2P8X">
    <property type="method" value="EM"/>
    <property type="resolution" value="9.70 A"/>
    <property type="chains" value="S=36-70"/>
</dbReference>
<dbReference type="PDB" id="2P8Z">
    <property type="method" value="EM"/>
    <property type="resolution" value="8.90 A"/>
    <property type="chains" value="S=36-70"/>
</dbReference>
<dbReference type="PDB" id="3DWU">
    <property type="method" value="EM"/>
    <property type="resolution" value="12.60 A"/>
    <property type="chains" value="A=21-66"/>
</dbReference>
<dbReference type="PDB" id="4V5L">
    <property type="method" value="X-ray"/>
    <property type="resolution" value="3.10 A"/>
    <property type="chains" value="AZ=2-406"/>
</dbReference>
<dbReference type="PDB" id="4V68">
    <property type="method" value="EM"/>
    <property type="resolution" value="6.40 A"/>
    <property type="chains" value="AZ=2-406"/>
</dbReference>
<dbReference type="PDBsum" id="2C77"/>
<dbReference type="PDBsum" id="2P8W"/>
<dbReference type="PDBsum" id="2P8X"/>
<dbReference type="PDBsum" id="2P8Z"/>
<dbReference type="PDBsum" id="3DWU"/>
<dbReference type="PDBsum" id="4V5L"/>
<dbReference type="PDBsum" id="4V68"/>
<dbReference type="SMR" id="P60339"/>
<dbReference type="DrugBank" id="DB04124">
    <property type="generic name" value="Aurodox"/>
</dbReference>
<dbReference type="DrugBank" id="DB04315">
    <property type="generic name" value="Guanosine-5'-Diphosphate"/>
</dbReference>
<dbReference type="EnsemblBacteria" id="BAD70074">
    <property type="protein sequence ID" value="BAD70074"/>
    <property type="gene ID" value="BAD70074"/>
</dbReference>
<dbReference type="GeneID" id="3168327"/>
<dbReference type="KEGG" id="ttj:TTHA0251"/>
<dbReference type="PATRIC" id="fig|300852.9.peg.251"/>
<dbReference type="eggNOG" id="COG0050">
    <property type="taxonomic scope" value="Bacteria"/>
</dbReference>
<dbReference type="HOGENOM" id="CLU_007265_0_1_0"/>
<dbReference type="PhylomeDB" id="P60339"/>
<dbReference type="EvolutionaryTrace" id="P60339"/>
<dbReference type="Proteomes" id="UP000000532">
    <property type="component" value="Chromosome"/>
</dbReference>
<dbReference type="GO" id="GO:0005829">
    <property type="term" value="C:cytosol"/>
    <property type="evidence" value="ECO:0007669"/>
    <property type="project" value="TreeGrafter"/>
</dbReference>
<dbReference type="GO" id="GO:0005525">
    <property type="term" value="F:GTP binding"/>
    <property type="evidence" value="ECO:0007669"/>
    <property type="project" value="UniProtKB-UniRule"/>
</dbReference>
<dbReference type="GO" id="GO:0003924">
    <property type="term" value="F:GTPase activity"/>
    <property type="evidence" value="ECO:0007669"/>
    <property type="project" value="InterPro"/>
</dbReference>
<dbReference type="GO" id="GO:0003746">
    <property type="term" value="F:translation elongation factor activity"/>
    <property type="evidence" value="ECO:0007669"/>
    <property type="project" value="UniProtKB-UniRule"/>
</dbReference>
<dbReference type="CDD" id="cd01884">
    <property type="entry name" value="EF_Tu"/>
    <property type="match status" value="1"/>
</dbReference>
<dbReference type="CDD" id="cd03697">
    <property type="entry name" value="EFTU_II"/>
    <property type="match status" value="1"/>
</dbReference>
<dbReference type="CDD" id="cd03707">
    <property type="entry name" value="EFTU_III"/>
    <property type="match status" value="1"/>
</dbReference>
<dbReference type="FunFam" id="2.40.30.10:FF:000001">
    <property type="entry name" value="Elongation factor Tu"/>
    <property type="match status" value="1"/>
</dbReference>
<dbReference type="FunFam" id="3.40.50.300:FF:000003">
    <property type="entry name" value="Elongation factor Tu"/>
    <property type="match status" value="1"/>
</dbReference>
<dbReference type="Gene3D" id="3.40.50.300">
    <property type="entry name" value="P-loop containing nucleotide triphosphate hydrolases"/>
    <property type="match status" value="1"/>
</dbReference>
<dbReference type="Gene3D" id="2.40.30.10">
    <property type="entry name" value="Translation factors"/>
    <property type="match status" value="2"/>
</dbReference>
<dbReference type="HAMAP" id="MF_00118_B">
    <property type="entry name" value="EF_Tu_B"/>
    <property type="match status" value="1"/>
</dbReference>
<dbReference type="InterPro" id="IPR041709">
    <property type="entry name" value="EF-Tu_GTP-bd"/>
</dbReference>
<dbReference type="InterPro" id="IPR050055">
    <property type="entry name" value="EF-Tu_GTPase"/>
</dbReference>
<dbReference type="InterPro" id="IPR004161">
    <property type="entry name" value="EFTu-like_2"/>
</dbReference>
<dbReference type="InterPro" id="IPR033720">
    <property type="entry name" value="EFTU_2"/>
</dbReference>
<dbReference type="InterPro" id="IPR031157">
    <property type="entry name" value="G_TR_CS"/>
</dbReference>
<dbReference type="InterPro" id="IPR027417">
    <property type="entry name" value="P-loop_NTPase"/>
</dbReference>
<dbReference type="InterPro" id="IPR005225">
    <property type="entry name" value="Small_GTP-bd"/>
</dbReference>
<dbReference type="InterPro" id="IPR000795">
    <property type="entry name" value="T_Tr_GTP-bd_dom"/>
</dbReference>
<dbReference type="InterPro" id="IPR009000">
    <property type="entry name" value="Transl_B-barrel_sf"/>
</dbReference>
<dbReference type="InterPro" id="IPR009001">
    <property type="entry name" value="Transl_elong_EF1A/Init_IF2_C"/>
</dbReference>
<dbReference type="InterPro" id="IPR004541">
    <property type="entry name" value="Transl_elong_EFTu/EF1A_bac/org"/>
</dbReference>
<dbReference type="InterPro" id="IPR004160">
    <property type="entry name" value="Transl_elong_EFTu/EF1A_C"/>
</dbReference>
<dbReference type="NCBIfam" id="TIGR00485">
    <property type="entry name" value="EF-Tu"/>
    <property type="match status" value="1"/>
</dbReference>
<dbReference type="NCBIfam" id="NF000766">
    <property type="entry name" value="PRK00049.1"/>
    <property type="match status" value="1"/>
</dbReference>
<dbReference type="NCBIfam" id="NF009372">
    <property type="entry name" value="PRK12735.1"/>
    <property type="match status" value="1"/>
</dbReference>
<dbReference type="NCBIfam" id="NF009373">
    <property type="entry name" value="PRK12736.1"/>
    <property type="match status" value="1"/>
</dbReference>
<dbReference type="NCBIfam" id="TIGR00231">
    <property type="entry name" value="small_GTP"/>
    <property type="match status" value="1"/>
</dbReference>
<dbReference type="PANTHER" id="PTHR43721:SF22">
    <property type="entry name" value="ELONGATION FACTOR TU, MITOCHONDRIAL"/>
    <property type="match status" value="1"/>
</dbReference>
<dbReference type="PANTHER" id="PTHR43721">
    <property type="entry name" value="ELONGATION FACTOR TU-RELATED"/>
    <property type="match status" value="1"/>
</dbReference>
<dbReference type="Pfam" id="PF00009">
    <property type="entry name" value="GTP_EFTU"/>
    <property type="match status" value="1"/>
</dbReference>
<dbReference type="Pfam" id="PF03144">
    <property type="entry name" value="GTP_EFTU_D2"/>
    <property type="match status" value="1"/>
</dbReference>
<dbReference type="Pfam" id="PF03143">
    <property type="entry name" value="GTP_EFTU_D3"/>
    <property type="match status" value="1"/>
</dbReference>
<dbReference type="PRINTS" id="PR00315">
    <property type="entry name" value="ELONGATNFCT"/>
</dbReference>
<dbReference type="SUPFAM" id="SSF50465">
    <property type="entry name" value="EF-Tu/eEF-1alpha/eIF2-gamma C-terminal domain"/>
    <property type="match status" value="1"/>
</dbReference>
<dbReference type="SUPFAM" id="SSF52540">
    <property type="entry name" value="P-loop containing nucleoside triphosphate hydrolases"/>
    <property type="match status" value="1"/>
</dbReference>
<dbReference type="SUPFAM" id="SSF50447">
    <property type="entry name" value="Translation proteins"/>
    <property type="match status" value="1"/>
</dbReference>
<dbReference type="PROSITE" id="PS00301">
    <property type="entry name" value="G_TR_1"/>
    <property type="match status" value="1"/>
</dbReference>
<dbReference type="PROSITE" id="PS51722">
    <property type="entry name" value="G_TR_2"/>
    <property type="match status" value="1"/>
</dbReference>
<reference key="1">
    <citation type="journal article" date="1991" name="FEBS Lett.">
        <title>Molecular cloning, nucleotide sequence and expression of the tufB gene encoding elongation factor Tu from Thermus thermophilus HB8.</title>
        <authorList>
            <person name="Satoh M."/>
            <person name="Tanaka T."/>
            <person name="Kushiro A."/>
            <person name="Hakoshima T."/>
            <person name="Tomita K."/>
        </authorList>
    </citation>
    <scope>NUCLEOTIDE SEQUENCE [GENOMIC DNA]</scope>
</reference>
<reference key="2">
    <citation type="submission" date="2004-11" db="EMBL/GenBank/DDBJ databases">
        <title>Complete genome sequence of Thermus thermophilus HB8.</title>
        <authorList>
            <person name="Masui R."/>
            <person name="Kurokawa K."/>
            <person name="Nakagawa N."/>
            <person name="Tokunaga F."/>
            <person name="Koyama Y."/>
            <person name="Shibata T."/>
            <person name="Oshima T."/>
            <person name="Yokoyama S."/>
            <person name="Yasunaga T."/>
            <person name="Kuramitsu S."/>
        </authorList>
    </citation>
    <scope>NUCLEOTIDE SEQUENCE [LARGE SCALE GENOMIC DNA]</scope>
    <source>
        <strain>ATCC 27634 / DSM 579 / HB8</strain>
    </source>
</reference>
<reference key="3">
    <citation type="journal article" date="2016" name="PLoS Biol.">
        <title>Elongation factor Tu prevents misediting of Gly-tRNA(Gly) caused by the design behind the chiral proofreading site of D-aminoacyl-tRNA deacylase.</title>
        <authorList>
            <person name="Routh S.B."/>
            <person name="Pawar K.I."/>
            <person name="Ahmad S."/>
            <person name="Singh S."/>
            <person name="Suma K."/>
            <person name="Kumar M."/>
            <person name="Kuncha S.K."/>
            <person name="Yadav K."/>
            <person name="Kruparani S.P."/>
            <person name="Sankaranarayanan R."/>
        </authorList>
    </citation>
    <scope>FUNCTION</scope>
</reference>